<proteinExistence type="evidence at protein level"/>
<name>ASR3_ARATH</name>
<dbReference type="EMBL" id="HQ322383">
    <property type="protein sequence ID" value="AEK67478.1"/>
    <property type="molecule type" value="mRNA"/>
</dbReference>
<dbReference type="EMBL" id="AC002332">
    <property type="protein sequence ID" value="AAB80672.1"/>
    <property type="molecule type" value="Genomic_DNA"/>
</dbReference>
<dbReference type="EMBL" id="CP002685">
    <property type="protein sequence ID" value="AEC08851.1"/>
    <property type="molecule type" value="Genomic_DNA"/>
</dbReference>
<dbReference type="EMBL" id="AY065364">
    <property type="protein sequence ID" value="AAL38805.1"/>
    <property type="molecule type" value="mRNA"/>
</dbReference>
<dbReference type="EMBL" id="AY096389">
    <property type="protein sequence ID" value="AAM20030.1"/>
    <property type="molecule type" value="mRNA"/>
</dbReference>
<dbReference type="PIR" id="H84746">
    <property type="entry name" value="H84746"/>
</dbReference>
<dbReference type="RefSeq" id="NP_850213.1">
    <molecule id="Q8VZ20-1"/>
    <property type="nucleotide sequence ID" value="NM_179882.2"/>
</dbReference>
<dbReference type="FunCoup" id="Q8VZ20">
    <property type="interactions" value="196"/>
</dbReference>
<dbReference type="IntAct" id="Q8VZ20">
    <property type="interactions" value="6"/>
</dbReference>
<dbReference type="STRING" id="3702.Q8VZ20"/>
<dbReference type="iPTMnet" id="Q8VZ20"/>
<dbReference type="PaxDb" id="3702-AT2G33550.1"/>
<dbReference type="ProteomicsDB" id="246806">
    <molecule id="Q8VZ20-1"/>
</dbReference>
<dbReference type="EnsemblPlants" id="AT2G33550.1">
    <molecule id="Q8VZ20-1"/>
    <property type="protein sequence ID" value="AT2G33550.1"/>
    <property type="gene ID" value="AT2G33550"/>
</dbReference>
<dbReference type="GeneID" id="817920"/>
<dbReference type="Gramene" id="AT2G33550.1">
    <molecule id="Q8VZ20-1"/>
    <property type="protein sequence ID" value="AT2G33550.1"/>
    <property type="gene ID" value="AT2G33550"/>
</dbReference>
<dbReference type="KEGG" id="ath:AT2G33550"/>
<dbReference type="Araport" id="AT2G33550"/>
<dbReference type="TAIR" id="AT2G33550">
    <property type="gene designation" value="ASR3"/>
</dbReference>
<dbReference type="eggNOG" id="ENOG502QTXI">
    <property type="taxonomic scope" value="Eukaryota"/>
</dbReference>
<dbReference type="HOGENOM" id="CLU_060472_0_0_1"/>
<dbReference type="InParanoid" id="Q8VZ20"/>
<dbReference type="OMA" id="PQYHLID"/>
<dbReference type="OrthoDB" id="1865198at2759"/>
<dbReference type="PhylomeDB" id="Q8VZ20"/>
<dbReference type="PRO" id="PR:Q8VZ20"/>
<dbReference type="Proteomes" id="UP000006548">
    <property type="component" value="Chromosome 2"/>
</dbReference>
<dbReference type="ExpressionAtlas" id="Q8VZ20">
    <property type="expression patterns" value="baseline and differential"/>
</dbReference>
<dbReference type="GO" id="GO:0005634">
    <property type="term" value="C:nucleus"/>
    <property type="evidence" value="ECO:0000314"/>
    <property type="project" value="UniProtKB"/>
</dbReference>
<dbReference type="GO" id="GO:0003677">
    <property type="term" value="F:DNA binding"/>
    <property type="evidence" value="ECO:0000314"/>
    <property type="project" value="UniProtKB"/>
</dbReference>
<dbReference type="GO" id="GO:0003700">
    <property type="term" value="F:DNA-binding transcription factor activity"/>
    <property type="evidence" value="ECO:0000250"/>
    <property type="project" value="TAIR"/>
</dbReference>
<dbReference type="GO" id="GO:0042803">
    <property type="term" value="F:protein homodimerization activity"/>
    <property type="evidence" value="ECO:0000314"/>
    <property type="project" value="UniProtKB"/>
</dbReference>
<dbReference type="GO" id="GO:0071219">
    <property type="term" value="P:cellular response to molecule of bacterial origin"/>
    <property type="evidence" value="ECO:0000314"/>
    <property type="project" value="UniProtKB"/>
</dbReference>
<dbReference type="GO" id="GO:0006952">
    <property type="term" value="P:defense response"/>
    <property type="evidence" value="ECO:0007669"/>
    <property type="project" value="UniProtKB-KW"/>
</dbReference>
<dbReference type="GO" id="GO:0045892">
    <property type="term" value="P:negative regulation of DNA-templated transcription"/>
    <property type="evidence" value="ECO:0000314"/>
    <property type="project" value="UniProtKB"/>
</dbReference>
<dbReference type="GO" id="GO:0050777">
    <property type="term" value="P:negative regulation of immune response"/>
    <property type="evidence" value="ECO:0000315"/>
    <property type="project" value="UniProtKB"/>
</dbReference>
<dbReference type="GO" id="GO:0006355">
    <property type="term" value="P:regulation of DNA-templated transcription"/>
    <property type="evidence" value="ECO:0000304"/>
    <property type="project" value="TAIR"/>
</dbReference>
<dbReference type="FunFam" id="1.10.10.60:FF:000470">
    <property type="entry name" value="Trihelix transcription factor ASR3"/>
    <property type="match status" value="1"/>
</dbReference>
<dbReference type="Gene3D" id="1.10.10.60">
    <property type="entry name" value="Homeodomain-like"/>
    <property type="match status" value="1"/>
</dbReference>
<dbReference type="InterPro" id="IPR044822">
    <property type="entry name" value="Myb_DNA-bind_4"/>
</dbReference>
<dbReference type="InterPro" id="IPR001005">
    <property type="entry name" value="SANT/Myb"/>
</dbReference>
<dbReference type="PANTHER" id="PTHR47211">
    <property type="entry name" value="TRIHELIX TRANSCRIPTION FACTOR ASR3"/>
    <property type="match status" value="1"/>
</dbReference>
<dbReference type="PANTHER" id="PTHR47211:SF2">
    <property type="entry name" value="TRIHELIX TRANSCRIPTION FACTOR ASR3"/>
    <property type="match status" value="1"/>
</dbReference>
<dbReference type="Pfam" id="PF13837">
    <property type="entry name" value="Myb_DNA-bind_4"/>
    <property type="match status" value="1"/>
</dbReference>
<dbReference type="PROSITE" id="PS50090">
    <property type="entry name" value="MYB_LIKE"/>
    <property type="match status" value="1"/>
</dbReference>
<gene>
    <name evidence="5" type="primary">ASR3</name>
    <name evidence="7" type="ordered locus">At2g33550</name>
    <name evidence="8" type="ORF">F4P9.32</name>
</gene>
<evidence type="ECO:0000255" key="1">
    <source>
        <dbReference type="PROSITE-ProRule" id="PRU00133"/>
    </source>
</evidence>
<evidence type="ECO:0000255" key="2">
    <source>
        <dbReference type="PROSITE-ProRule" id="PRU00768"/>
    </source>
</evidence>
<evidence type="ECO:0000256" key="3">
    <source>
        <dbReference type="SAM" id="MobiDB-lite"/>
    </source>
</evidence>
<evidence type="ECO:0000269" key="4">
    <source>
    </source>
</evidence>
<evidence type="ECO:0000303" key="5">
    <source>
    </source>
</evidence>
<evidence type="ECO:0000305" key="6">
    <source>
    </source>
</evidence>
<evidence type="ECO:0000312" key="7">
    <source>
        <dbReference type="Araport" id="AT2G33550"/>
    </source>
</evidence>
<evidence type="ECO:0000312" key="8">
    <source>
        <dbReference type="EMBL" id="AAB80672.1"/>
    </source>
</evidence>
<evidence type="ECO:0000312" key="9">
    <source>
        <dbReference type="EMBL" id="AAL38805.1"/>
    </source>
</evidence>
<accession>Q8VZ20</accession>
<accession>O22805</accession>
<organism evidence="9">
    <name type="scientific">Arabidopsis thaliana</name>
    <name type="common">Mouse-ear cress</name>
    <dbReference type="NCBI Taxonomy" id="3702"/>
    <lineage>
        <taxon>Eukaryota</taxon>
        <taxon>Viridiplantae</taxon>
        <taxon>Streptophyta</taxon>
        <taxon>Embryophyta</taxon>
        <taxon>Tracheophyta</taxon>
        <taxon>Spermatophyta</taxon>
        <taxon>Magnoliopsida</taxon>
        <taxon>eudicotyledons</taxon>
        <taxon>Gunneridae</taxon>
        <taxon>Pentapetalae</taxon>
        <taxon>rosids</taxon>
        <taxon>malvids</taxon>
        <taxon>Brassicales</taxon>
        <taxon>Brassicaceae</taxon>
        <taxon>Camelineae</taxon>
        <taxon>Arabidopsis</taxon>
    </lineage>
</organism>
<comment type="function">
    <text evidence="4">Transcriptional repressor that binds DNA and plays a negative role in regulating microbe-associated molecular patterns-(MAMPs, e.g. flg22, elf18, chitin, and LPS) triggered immunity (PTI) by negatively regulating immune gene expression.</text>
</comment>
<comment type="subunit">
    <text evidence="4">Homodimer. Interacts directly with MPK4.</text>
</comment>
<comment type="subcellular location">
    <subcellularLocation>
        <location evidence="2 4">Nucleus</location>
    </subcellularLocation>
</comment>
<comment type="alternative products">
    <event type="alternative splicing"/>
    <isoform>
        <id>Q8VZ20-1</id>
        <name>1</name>
        <sequence type="displayed"/>
    </isoform>
    <isoform>
        <id>Q8VZ20-2</id>
        <name>2</name>
        <sequence type="described" ref="VSP_057831"/>
    </isoform>
</comment>
<comment type="domain">
    <text evidence="4">EAR motifs are involved in transcriptional repressor activity.</text>
</comment>
<comment type="PTM">
    <text evidence="4">Phosphorylated on Thr-189 by MPK4 in response to microbe-associated molecular patterns (MAMPs, e.g. flg22, elf18, chitin, and LPS). This phosphorylation enhances DNA-binding and thus negatively regulates immune gene expression.</text>
</comment>
<comment type="disruption phenotype">
    <text evidence="4">Enhanced disease resistance to virulent bacterial pathogen infection such as P.syringae pv tomato (Pst) DC3000 and P.syringae pv maculicola (Psm) ES4326 associated with immune gene activation.</text>
</comment>
<feature type="chain" id="PRO_0000433633" description="Trihelix transcription factor ASR3">
    <location>
        <begin position="1"/>
        <end position="314"/>
    </location>
</feature>
<feature type="domain" description="Myb-like" evidence="1">
    <location>
        <begin position="38"/>
        <end position="104"/>
    </location>
</feature>
<feature type="region of interest" description="Disordered" evidence="3">
    <location>
        <begin position="1"/>
        <end position="34"/>
    </location>
</feature>
<feature type="region of interest" description="Disordered" evidence="3">
    <location>
        <begin position="207"/>
        <end position="255"/>
    </location>
</feature>
<feature type="short sequence motif" description="Nuclear localization signal" evidence="2">
    <location>
        <begin position="84"/>
        <end position="91"/>
    </location>
</feature>
<feature type="short sequence motif" description="EAR 1" evidence="6">
    <location>
        <begin position="161"/>
        <end position="165"/>
    </location>
</feature>
<feature type="short sequence motif" description="EAR 2" evidence="6">
    <location>
        <begin position="280"/>
        <end position="284"/>
    </location>
</feature>
<feature type="modified residue" description="Phosphothreonine; by MAPK4" evidence="4">
    <location>
        <position position="189"/>
    </location>
</feature>
<feature type="splice variant" id="VSP_057831" description="In isoform 2.">
    <location>
        <begin position="197"/>
        <end position="199"/>
    </location>
</feature>
<feature type="mutagenesis site" description="Impaired transcriptional repressor activity." evidence="4">
    <original>LSLGL</original>
    <variation>ASAGA</variation>
    <location>
        <begin position="161"/>
        <end position="165"/>
    </location>
</feature>
<feature type="mutagenesis site" description="Normal flg22-induced phosphorylation by MPK4." evidence="4">
    <original>S</original>
    <variation>A</variation>
    <location>
        <position position="169"/>
    </location>
</feature>
<feature type="mutagenesis site" description="Normal flg22-induced phosphorylation by MPK4." evidence="4">
    <original>S</original>
    <variation>A</variation>
    <location>
        <position position="175"/>
    </location>
</feature>
<feature type="mutagenesis site" description="Normal flg22-induced phosphorylation by MPK4." evidence="4">
    <original>S</original>
    <variation>A</variation>
    <location>
        <position position="182"/>
    </location>
</feature>
<feature type="mutagenesis site" description="Phospho-inactive sequence variation. Blocked flg22-induced phosphorylation by MPK4 but normal transcriptional repressor activity. Enhanced disease resistance." evidence="4">
    <original>T</original>
    <variation>A</variation>
    <location>
        <position position="189"/>
    </location>
</feature>
<feature type="mutagenesis site" description="Phospho-mimetic sequence variation. Normal transcriptional repressor activity but enhanced DNA-binding affinity leading to compromised microbe-associated molecular patterns- (MAMPs) triggered immunity (PTI) responses." evidence="4">
    <original>T</original>
    <variation>D</variation>
    <location>
        <position position="189"/>
    </location>
</feature>
<feature type="mutagenesis site" description="Normal flg22-induced phosphorylation by MPK4." evidence="4">
    <original>T</original>
    <variation>A</variation>
    <location>
        <position position="196"/>
    </location>
</feature>
<feature type="mutagenesis site" description="Normal flg22-induced phosphorylation by MPK4." evidence="4">
    <original>S</original>
    <variation>A</variation>
    <location>
        <position position="230"/>
    </location>
</feature>
<feature type="mutagenesis site" description="Impaired transcriptional repressor activity." evidence="4">
    <original>LNLKL</original>
    <variation>ANAKA</variation>
    <location>
        <begin position="280"/>
        <end position="284"/>
    </location>
</feature>
<reference key="1">
    <citation type="journal article" date="2011" name="PLoS ONE">
        <title>Speeding cis-trans regulation discovery by phylogenomic analyses coupled with screenings of an arrayed library of Arabidopsis transcription factors.</title>
        <authorList>
            <person name="Castrillo G."/>
            <person name="Turck F."/>
            <person name="Leveugle M."/>
            <person name="Lecharny A."/>
            <person name="Carbonero P."/>
            <person name="Coupland G."/>
            <person name="Paz-Ares J."/>
            <person name="Onate-Sanchez L."/>
        </authorList>
    </citation>
    <scope>NUCLEOTIDE SEQUENCE [MRNA] (ISOFORM 2)</scope>
</reference>
<reference key="2">
    <citation type="journal article" date="1999" name="Nature">
        <title>Sequence and analysis of chromosome 2 of the plant Arabidopsis thaliana.</title>
        <authorList>
            <person name="Lin X."/>
            <person name="Kaul S."/>
            <person name="Rounsley S.D."/>
            <person name="Shea T.P."/>
            <person name="Benito M.-I."/>
            <person name="Town C.D."/>
            <person name="Fujii C.Y."/>
            <person name="Mason T.M."/>
            <person name="Bowman C.L."/>
            <person name="Barnstead M.E."/>
            <person name="Feldblyum T.V."/>
            <person name="Buell C.R."/>
            <person name="Ketchum K.A."/>
            <person name="Lee J.J."/>
            <person name="Ronning C.M."/>
            <person name="Koo H.L."/>
            <person name="Moffat K.S."/>
            <person name="Cronin L.A."/>
            <person name="Shen M."/>
            <person name="Pai G."/>
            <person name="Van Aken S."/>
            <person name="Umayam L."/>
            <person name="Tallon L.J."/>
            <person name="Gill J.E."/>
            <person name="Adams M.D."/>
            <person name="Carrera A.J."/>
            <person name="Creasy T.H."/>
            <person name="Goodman H.M."/>
            <person name="Somerville C.R."/>
            <person name="Copenhaver G.P."/>
            <person name="Preuss D."/>
            <person name="Nierman W.C."/>
            <person name="White O."/>
            <person name="Eisen J.A."/>
            <person name="Salzberg S.L."/>
            <person name="Fraser C.M."/>
            <person name="Venter J.C."/>
        </authorList>
    </citation>
    <scope>NUCLEOTIDE SEQUENCE [LARGE SCALE GENOMIC DNA]</scope>
    <source>
        <strain>cv. Columbia</strain>
    </source>
</reference>
<reference key="3">
    <citation type="journal article" date="2017" name="Plant J.">
        <title>Araport11: a complete reannotation of the Arabidopsis thaliana reference genome.</title>
        <authorList>
            <person name="Cheng C.Y."/>
            <person name="Krishnakumar V."/>
            <person name="Chan A.P."/>
            <person name="Thibaud-Nissen F."/>
            <person name="Schobel S."/>
            <person name="Town C.D."/>
        </authorList>
    </citation>
    <scope>GENOME REANNOTATION</scope>
    <source>
        <strain>cv. Columbia</strain>
    </source>
</reference>
<reference key="4">
    <citation type="journal article" date="2003" name="Science">
        <title>Empirical analysis of transcriptional activity in the Arabidopsis genome.</title>
        <authorList>
            <person name="Yamada K."/>
            <person name="Lim J."/>
            <person name="Dale J.M."/>
            <person name="Chen H."/>
            <person name="Shinn P."/>
            <person name="Palm C.J."/>
            <person name="Southwick A.M."/>
            <person name="Wu H.C."/>
            <person name="Kim C.J."/>
            <person name="Nguyen M."/>
            <person name="Pham P.K."/>
            <person name="Cheuk R.F."/>
            <person name="Karlin-Newmann G."/>
            <person name="Liu S.X."/>
            <person name="Lam B."/>
            <person name="Sakano H."/>
            <person name="Wu T."/>
            <person name="Yu G."/>
            <person name="Miranda M."/>
            <person name="Quach H.L."/>
            <person name="Tripp M."/>
            <person name="Chang C.H."/>
            <person name="Lee J.M."/>
            <person name="Toriumi M.J."/>
            <person name="Chan M.M."/>
            <person name="Tang C.C."/>
            <person name="Onodera C.S."/>
            <person name="Deng J.M."/>
            <person name="Akiyama K."/>
            <person name="Ansari Y."/>
            <person name="Arakawa T."/>
            <person name="Banh J."/>
            <person name="Banno F."/>
            <person name="Bowser L."/>
            <person name="Brooks S.Y."/>
            <person name="Carninci P."/>
            <person name="Chao Q."/>
            <person name="Choy N."/>
            <person name="Enju A."/>
            <person name="Goldsmith A.D."/>
            <person name="Gurjal M."/>
            <person name="Hansen N.F."/>
            <person name="Hayashizaki Y."/>
            <person name="Johnson-Hopson C."/>
            <person name="Hsuan V.W."/>
            <person name="Iida K."/>
            <person name="Karnes M."/>
            <person name="Khan S."/>
            <person name="Koesema E."/>
            <person name="Ishida J."/>
            <person name="Jiang P.X."/>
            <person name="Jones T."/>
            <person name="Kawai J."/>
            <person name="Kamiya A."/>
            <person name="Meyers C."/>
            <person name="Nakajima M."/>
            <person name="Narusaka M."/>
            <person name="Seki M."/>
            <person name="Sakurai T."/>
            <person name="Satou M."/>
            <person name="Tamse R."/>
            <person name="Vaysberg M."/>
            <person name="Wallender E.K."/>
            <person name="Wong C."/>
            <person name="Yamamura Y."/>
            <person name="Yuan S."/>
            <person name="Shinozaki K."/>
            <person name="Davis R.W."/>
            <person name="Theologis A."/>
            <person name="Ecker J.R."/>
        </authorList>
    </citation>
    <scope>NUCLEOTIDE SEQUENCE [LARGE SCALE MRNA] (ISOFORM 1)</scope>
    <source>
        <strain>cv. Columbia</strain>
    </source>
</reference>
<reference key="5">
    <citation type="journal article" date="2015" name="Plant Cell">
        <title>Phosphorylation of trihelix transcriptional repressor ASR3 by MAP KINASE4 negatively regulates Arabidopsis immunity.</title>
        <authorList>
            <person name="Li B."/>
            <person name="Jiang S."/>
            <person name="Yu X."/>
            <person name="Cheng C."/>
            <person name="Chen S."/>
            <person name="Cheng Y."/>
            <person name="Yuan J.S."/>
            <person name="Jiang D."/>
            <person name="He P."/>
            <person name="Shan L."/>
        </authorList>
    </citation>
    <scope>FUNCTION</scope>
    <scope>DISRUPTION PHENOTYPE</scope>
    <scope>MUTAGENESIS OF 161-LEU--LEU-165; SER-169; SER-175; SER-182; THR-189; THR-196; SER-230 AND 280-LEU--LEU-284</scope>
    <scope>PHOSPHORYLATION AT THR-189</scope>
    <scope>INTERACTION WITH MPK4</scope>
    <scope>HOMODIMERIZATION</scope>
    <scope>SUBCELLULAR LOCATION</scope>
    <scope>EAR MOTIF</scope>
    <scope>DOMAIN</scope>
    <source>
        <strain>cv. Columbia</strain>
        <strain>cv. Landsberg erecta</strain>
    </source>
</reference>
<keyword id="KW-0025">Alternative splicing</keyword>
<keyword id="KW-0238">DNA-binding</keyword>
<keyword id="KW-0539">Nucleus</keyword>
<keyword id="KW-0597">Phosphoprotein</keyword>
<keyword id="KW-0611">Plant defense</keyword>
<keyword id="KW-1185">Reference proteome</keyword>
<keyword id="KW-0677">Repeat</keyword>
<keyword id="KW-0678">Repressor</keyword>
<keyword id="KW-0804">Transcription</keyword>
<keyword id="KW-0805">Transcription regulation</keyword>
<protein>
    <recommendedName>
        <fullName evidence="5">Trihelix transcription factor ASR3</fullName>
    </recommendedName>
    <alternativeName>
        <fullName evidence="5">Protein ARABIDOPSIS SH4-RELATED3</fullName>
    </alternativeName>
</protein>
<sequence length="314" mass="34861">MALEQLGLGVSAVDGGENSSAPSNDGGDDGVKTARLPRWTRQEILVLIQGKRVAENRVRRGRAAGMALGSGQMEPKWASVSSYCKRHGVNRGPVQCRKRWSNLAGDYKKIKEWESQIKEETESYWVMRNDVRREKKLPGFFDKEVYDIVDGGVIPPAVPVLSLGLAPASDEGLLSDLDRRESPEKLNSTPVAKSVTDVIDKEKQEACVADQGRVKEKQPEAANVEGGSTSQEERKRKRTSFGEKEEEEEEGETKKMQNQLIEILERNGQLLAAQLEVQNLNLKLDREQRKDHGDSLVAVLNKLADAVAKIADKM</sequence>